<feature type="chain" id="PRO_1000136226" description="Protein PsiE homolog">
    <location>
        <begin position="1"/>
        <end position="135"/>
    </location>
</feature>
<feature type="transmembrane region" description="Helical" evidence="1">
    <location>
        <begin position="20"/>
        <end position="40"/>
    </location>
</feature>
<feature type="transmembrane region" description="Helical" evidence="1">
    <location>
        <begin position="54"/>
        <end position="74"/>
    </location>
</feature>
<feature type="transmembrane region" description="Helical" evidence="1">
    <location>
        <begin position="82"/>
        <end position="102"/>
    </location>
</feature>
<feature type="transmembrane region" description="Helical" evidence="1">
    <location>
        <begin position="107"/>
        <end position="127"/>
    </location>
</feature>
<name>PSIE_YERPG</name>
<evidence type="ECO:0000255" key="1">
    <source>
        <dbReference type="HAMAP-Rule" id="MF_01048"/>
    </source>
</evidence>
<sequence length="135" mass="15648">MAKNSRSQWIAKNLQRLLNVGLIMLAAILVVFLVKETIHLGKVLFLSNQETSSYMLIEGIVIYFLYFEFIALIVKYFESGYHFPLRYFIYIGITAIIRLIIVDHENPIDTLIYSGSILVLVVTLYLANTERLKRE</sequence>
<proteinExistence type="inferred from homology"/>
<accession>A9R535</accession>
<comment type="subcellular location">
    <subcellularLocation>
        <location evidence="1">Cell inner membrane</location>
        <topology evidence="1">Multi-pass membrane protein</topology>
    </subcellularLocation>
</comment>
<comment type="similarity">
    <text evidence="1">Belongs to the PsiE family.</text>
</comment>
<keyword id="KW-0997">Cell inner membrane</keyword>
<keyword id="KW-1003">Cell membrane</keyword>
<keyword id="KW-0472">Membrane</keyword>
<keyword id="KW-0812">Transmembrane</keyword>
<keyword id="KW-1133">Transmembrane helix</keyword>
<dbReference type="EMBL" id="CP000901">
    <property type="protein sequence ID" value="ABX87145.1"/>
    <property type="molecule type" value="Genomic_DNA"/>
</dbReference>
<dbReference type="RefSeq" id="WP_002212086.1">
    <property type="nucleotide sequence ID" value="NZ_CP009935.1"/>
</dbReference>
<dbReference type="SMR" id="A9R535"/>
<dbReference type="GeneID" id="96663139"/>
<dbReference type="KEGG" id="ypg:YpAngola_A3917"/>
<dbReference type="PATRIC" id="fig|349746.12.peg.636"/>
<dbReference type="GO" id="GO:0005886">
    <property type="term" value="C:plasma membrane"/>
    <property type="evidence" value="ECO:0007669"/>
    <property type="project" value="UniProtKB-SubCell"/>
</dbReference>
<dbReference type="GO" id="GO:0016036">
    <property type="term" value="P:cellular response to phosphate starvation"/>
    <property type="evidence" value="ECO:0007669"/>
    <property type="project" value="InterPro"/>
</dbReference>
<dbReference type="HAMAP" id="MF_01048">
    <property type="entry name" value="PsiE"/>
    <property type="match status" value="1"/>
</dbReference>
<dbReference type="InterPro" id="IPR009315">
    <property type="entry name" value="P_starv_induced_PsiE"/>
</dbReference>
<dbReference type="InterPro" id="IPR020948">
    <property type="entry name" value="P_starv_induced_PsiE-like"/>
</dbReference>
<dbReference type="NCBIfam" id="NF002764">
    <property type="entry name" value="PRK02833.1-2"/>
    <property type="match status" value="1"/>
</dbReference>
<dbReference type="NCBIfam" id="NF002765">
    <property type="entry name" value="PRK02833.1-3"/>
    <property type="match status" value="1"/>
</dbReference>
<dbReference type="PANTHER" id="PTHR37819">
    <property type="entry name" value="PROTEIN PSIE"/>
    <property type="match status" value="1"/>
</dbReference>
<dbReference type="PANTHER" id="PTHR37819:SF1">
    <property type="entry name" value="PROTEIN PSIE"/>
    <property type="match status" value="1"/>
</dbReference>
<dbReference type="Pfam" id="PF06146">
    <property type="entry name" value="PsiE"/>
    <property type="match status" value="1"/>
</dbReference>
<dbReference type="PIRSF" id="PIRSF029598">
    <property type="entry name" value="PsiE"/>
    <property type="match status" value="1"/>
</dbReference>
<gene>
    <name evidence="1" type="primary">psiE</name>
    <name type="ordered locus">YpAngola_A3917</name>
</gene>
<organism>
    <name type="scientific">Yersinia pestis bv. Antiqua (strain Angola)</name>
    <dbReference type="NCBI Taxonomy" id="349746"/>
    <lineage>
        <taxon>Bacteria</taxon>
        <taxon>Pseudomonadati</taxon>
        <taxon>Pseudomonadota</taxon>
        <taxon>Gammaproteobacteria</taxon>
        <taxon>Enterobacterales</taxon>
        <taxon>Yersiniaceae</taxon>
        <taxon>Yersinia</taxon>
    </lineage>
</organism>
<protein>
    <recommendedName>
        <fullName evidence="1">Protein PsiE homolog</fullName>
    </recommendedName>
</protein>
<reference key="1">
    <citation type="journal article" date="2010" name="J. Bacteriol.">
        <title>Genome sequence of the deep-rooted Yersinia pestis strain Angola reveals new insights into the evolution and pangenome of the plague bacterium.</title>
        <authorList>
            <person name="Eppinger M."/>
            <person name="Worsham P.L."/>
            <person name="Nikolich M.P."/>
            <person name="Riley D.R."/>
            <person name="Sebastian Y."/>
            <person name="Mou S."/>
            <person name="Achtman M."/>
            <person name="Lindler L.E."/>
            <person name="Ravel J."/>
        </authorList>
    </citation>
    <scope>NUCLEOTIDE SEQUENCE [LARGE SCALE GENOMIC DNA]</scope>
    <source>
        <strain>Angola</strain>
    </source>
</reference>